<organismHost>
    <name type="scientific">Homo sapiens</name>
    <name type="common">Human</name>
    <dbReference type="NCBI Taxonomy" id="9606"/>
</organismHost>
<evidence type="ECO:0000256" key="1">
    <source>
        <dbReference type="SAM" id="MobiDB-lite"/>
    </source>
</evidence>
<evidence type="ECO:0000269" key="2">
    <source>
    </source>
</evidence>
<evidence type="ECO:0000269" key="3">
    <source>
    </source>
</evidence>
<evidence type="ECO:0000269" key="4">
    <source>
    </source>
</evidence>
<evidence type="ECO:0000269" key="5">
    <source>
    </source>
</evidence>
<evidence type="ECO:0000269" key="6">
    <source>
    </source>
</evidence>
<evidence type="ECO:0000269" key="7">
    <source>
    </source>
</evidence>
<evidence type="ECO:0000269" key="8">
    <source>
    </source>
</evidence>
<evidence type="ECO:0000269" key="9">
    <source>
    </source>
</evidence>
<evidence type="ECO:0000269" key="10">
    <source>
    </source>
</evidence>
<evidence type="ECO:0000269" key="11">
    <source>
    </source>
</evidence>
<evidence type="ECO:0000305" key="12"/>
<evidence type="ECO:0007744" key="13">
    <source>
        <dbReference type="PDB" id="2Z0L"/>
    </source>
</evidence>
<evidence type="ECO:0007829" key="14">
    <source>
        <dbReference type="PDB" id="2Z0L"/>
    </source>
</evidence>
<dbReference type="EMBL" id="V01555">
    <property type="protein sequence ID" value="CAA24844.1"/>
    <property type="molecule type" value="Genomic_DNA"/>
</dbReference>
<dbReference type="EMBL" id="M17322">
    <property type="protein sequence ID" value="AAA45877.1"/>
    <property type="molecule type" value="Genomic_DNA"/>
</dbReference>
<dbReference type="EMBL" id="AJ507799">
    <property type="protein sequence ID" value="CAD53407.1"/>
    <property type="molecule type" value="Genomic_DNA"/>
</dbReference>
<dbReference type="PIR" id="B43041">
    <property type="entry name" value="QQBE13"/>
</dbReference>
<dbReference type="RefSeq" id="YP_401657.1">
    <property type="nucleotide sequence ID" value="NC_007605.1"/>
</dbReference>
<dbReference type="PDB" id="2Z0L">
    <property type="method" value="X-ray"/>
    <property type="resolution" value="2.90 A"/>
    <property type="chains" value="A/B/C/D/E/F/G/H=1-314"/>
</dbReference>
<dbReference type="PDBsum" id="2Z0L"/>
<dbReference type="SMR" id="P03191"/>
<dbReference type="BioGRID" id="971760">
    <property type="interactions" value="1"/>
</dbReference>
<dbReference type="iPTMnet" id="P03191"/>
<dbReference type="DNASU" id="3783718"/>
<dbReference type="GeneID" id="3783718"/>
<dbReference type="KEGG" id="vg:3783718"/>
<dbReference type="EvolutionaryTrace" id="P03191"/>
<dbReference type="Proteomes" id="UP000153037">
    <property type="component" value="Segment"/>
</dbReference>
<dbReference type="GO" id="GO:0042025">
    <property type="term" value="C:host cell nucleus"/>
    <property type="evidence" value="ECO:0000314"/>
    <property type="project" value="UniProtKB"/>
</dbReference>
<dbReference type="GO" id="GO:0019033">
    <property type="term" value="C:viral tegument"/>
    <property type="evidence" value="ECO:0007669"/>
    <property type="project" value="UniProtKB-SubCell"/>
</dbReference>
<dbReference type="GO" id="GO:0003677">
    <property type="term" value="F:DNA binding"/>
    <property type="evidence" value="ECO:0000314"/>
    <property type="project" value="UniProtKB"/>
</dbReference>
<dbReference type="GO" id="GO:0039686">
    <property type="term" value="P:bidirectional double-stranded viral DNA replication"/>
    <property type="evidence" value="ECO:0000314"/>
    <property type="project" value="UniProtKB"/>
</dbReference>
<dbReference type="GO" id="GO:0039645">
    <property type="term" value="P:symbiont-mediated perturbation of host cell cycle G1/S transition checkpoint"/>
    <property type="evidence" value="ECO:0007669"/>
    <property type="project" value="UniProtKB-KW"/>
</dbReference>
<dbReference type="Gene3D" id="3.70.10.10">
    <property type="match status" value="1"/>
</dbReference>
<dbReference type="InterPro" id="IPR007013">
    <property type="entry name" value="DNA_pol_proc_fac_herpes"/>
</dbReference>
<dbReference type="Pfam" id="PF04929">
    <property type="entry name" value="Herpes_DNAp_acc"/>
    <property type="match status" value="1"/>
</dbReference>
<keyword id="KW-0002">3D-structure</keyword>
<keyword id="KW-0010">Activator</keyword>
<keyword id="KW-1015">Disulfide bond</keyword>
<keyword id="KW-0238">DNA-binding</keyword>
<keyword id="KW-0244">Early protein</keyword>
<keyword id="KW-1078">G1/S host cell cycle checkpoint dysregulation by virus</keyword>
<keyword id="KW-1048">Host nucleus</keyword>
<keyword id="KW-0945">Host-virus interaction</keyword>
<keyword id="KW-1121">Modulation of host cell cycle by virus</keyword>
<keyword id="KW-0597">Phosphoprotein</keyword>
<keyword id="KW-1185">Reference proteome</keyword>
<keyword id="KW-0804">Transcription</keyword>
<keyword id="KW-0805">Transcription regulation</keyword>
<keyword id="KW-0946">Virion</keyword>
<keyword id="KW-0920">Virion tegument</keyword>
<sequence>METTQTLRFKTKALAVLSKCYDHAQTHLKGGVLQVNLLSVNYGGPRLAAVANAGTAGLISFEVSPDAVAEWQNHQSPEEAPAAVSFRNLAYGRTCVLGKELFGSAVEQASLQFYKRPQGGSRPEFVKLTMEYDDKVSKSHHTCALMPYMPPASDRLRNEQMIGQVLLMPKTASSLQKWARQQGSGGVKVTLNPDLYVTTYTSGEACLTLDYKPLSVGPYEAFTGPVAKAQDVGAVEAHVVCSVAADSLAAALSLCRIPAVSVPILRFYRSGIIAVVAGLLTSAGDLPLDLSVILFNHASEEAAASTASEPEDKSPRVQPLGTGLQQRPRHTVSPSPSPPPPPRTPTWESPARPETPSPAIPSHSSNTALERPLAVQLARKRTSSEARQKQKHPKKVKQAFNPLI</sequence>
<feature type="chain" id="PRO_0000116071" description="DNA polymerase processivity factor BMRF1">
    <location>
        <begin position="1"/>
        <end position="404"/>
    </location>
</feature>
<feature type="region of interest" description="Homodimerization; DNA binding and DNA polymerase processivity" evidence="5">
    <location>
        <begin position="1"/>
        <end position="300"/>
    </location>
</feature>
<feature type="region of interest" description="Transcriptional activation" evidence="11">
    <location>
        <begin position="301"/>
        <end position="404"/>
    </location>
</feature>
<feature type="region of interest" description="Disordered" evidence="1">
    <location>
        <begin position="302"/>
        <end position="404"/>
    </location>
</feature>
<feature type="compositionally biased region" description="Pro residues" evidence="1">
    <location>
        <begin position="335"/>
        <end position="344"/>
    </location>
</feature>
<feature type="modified residue" description="Phosphoserine" evidence="4">
    <location>
        <position position="337"/>
    </location>
</feature>
<feature type="modified residue" description="Phosphothreonine" evidence="4">
    <location>
        <position position="344"/>
    </location>
</feature>
<feature type="modified residue" description="Phosphoserine" evidence="4">
    <location>
        <position position="349"/>
    </location>
</feature>
<feature type="modified residue" description="Phosphothreonine" evidence="4">
    <location>
        <position position="355"/>
    </location>
</feature>
<feature type="disulfide bond" description="Interchain" evidence="13">
    <location>
        <position position="95"/>
    </location>
</feature>
<feature type="disulfide bond" description="Interchain" evidence="13">
    <location>
        <position position="206"/>
    </location>
</feature>
<feature type="mutagenesis site" description="Complete loss of DNA binding activity and transactivation of the BDLF3 and BLLF1 promoters." evidence="7">
    <original>R</original>
    <variation>E</variation>
    <location>
        <position position="256"/>
    </location>
</feature>
<feature type="mutagenesis site" description="No effect on phosphorylation." evidence="4">
    <original>S</original>
    <variation>A</variation>
    <location>
        <position position="314"/>
    </location>
</feature>
<feature type="mutagenesis site" description="No effect on phosphorylation." evidence="4">
    <original>S</original>
    <variation>A</variation>
    <location>
        <position position="333"/>
    </location>
</feature>
<feature type="mutagenesis site" description="Complete loss of phosphorylation; when associated with V-344; A-349 and V-355." evidence="4">
    <original>S</original>
    <variation>A</variation>
    <location>
        <position position="337"/>
    </location>
</feature>
<feature type="mutagenesis site" description="Complete loss of phosphorylation; when associated with A-337; A-349 and V-355." evidence="4">
    <original>T</original>
    <variation>V</variation>
    <location>
        <position position="344"/>
    </location>
</feature>
<feature type="mutagenesis site" description="Complete loss of phosphorylation; when associated with A-337; V-344 and V-355." evidence="4">
    <original>S</original>
    <variation>A</variation>
    <location>
        <position position="349"/>
    </location>
</feature>
<feature type="mutagenesis site" description="Complete loss of phosphorylation; when associated with A-337; V-344 and A-349." evidence="4">
    <original>T</original>
    <variation>V</variation>
    <location>
        <position position="355"/>
    </location>
</feature>
<feature type="mutagenesis site" description="Complete loss of binding to host NuRD. Complete loss of transcriptional activity of on BDLF3 and BLLF1 EBV promoters." evidence="7">
    <original>RQK</original>
    <variation>AQA</variation>
    <location>
        <begin position="387"/>
        <end position="389"/>
    </location>
</feature>
<feature type="mutagenesis site" description="Complete loss of binding to host NuRD. Complete loss of transcriptional activity of on BDLF3 and BLLF1 EBV promoters." evidence="7">
    <original>P</original>
    <variation>A</variation>
    <location>
        <position position="393"/>
    </location>
</feature>
<feature type="strand" evidence="14">
    <location>
        <begin position="2"/>
        <end position="9"/>
    </location>
</feature>
<feature type="helix" evidence="14">
    <location>
        <begin position="13"/>
        <end position="17"/>
    </location>
</feature>
<feature type="helix" evidence="14">
    <location>
        <begin position="18"/>
        <end position="28"/>
    </location>
</feature>
<feature type="strand" evidence="14">
    <location>
        <begin position="31"/>
        <end position="37"/>
    </location>
</feature>
<feature type="helix" evidence="14">
    <location>
        <begin position="38"/>
        <end position="42"/>
    </location>
</feature>
<feature type="strand" evidence="14">
    <location>
        <begin position="46"/>
        <end position="52"/>
    </location>
</feature>
<feature type="strand" evidence="14">
    <location>
        <begin position="54"/>
        <end position="63"/>
    </location>
</feature>
<feature type="helix" evidence="14">
    <location>
        <begin position="65"/>
        <end position="67"/>
    </location>
</feature>
<feature type="strand" evidence="14">
    <location>
        <begin position="68"/>
        <end position="73"/>
    </location>
</feature>
<feature type="turn" evidence="14">
    <location>
        <begin position="77"/>
        <end position="79"/>
    </location>
</feature>
<feature type="strand" evidence="14">
    <location>
        <begin position="82"/>
        <end position="89"/>
    </location>
</feature>
<feature type="strand" evidence="14">
    <location>
        <begin position="94"/>
        <end position="96"/>
    </location>
</feature>
<feature type="helix" evidence="14">
    <location>
        <begin position="97"/>
        <end position="101"/>
    </location>
</feature>
<feature type="strand" evidence="14">
    <location>
        <begin position="106"/>
        <end position="115"/>
    </location>
</feature>
<feature type="strand" evidence="14">
    <location>
        <begin position="117"/>
        <end position="119"/>
    </location>
</feature>
<feature type="strand" evidence="14">
    <location>
        <begin position="125"/>
        <end position="132"/>
    </location>
</feature>
<feature type="strand" evidence="14">
    <location>
        <begin position="138"/>
        <end position="144"/>
    </location>
</feature>
<feature type="turn" evidence="14">
    <location>
        <begin position="152"/>
        <end position="156"/>
    </location>
</feature>
<feature type="strand" evidence="14">
    <location>
        <begin position="161"/>
        <end position="166"/>
    </location>
</feature>
<feature type="helix" evidence="14">
    <location>
        <begin position="169"/>
        <end position="181"/>
    </location>
</feature>
<feature type="turn" evidence="14">
    <location>
        <begin position="182"/>
        <end position="184"/>
    </location>
</feature>
<feature type="strand" evidence="14">
    <location>
        <begin position="185"/>
        <end position="192"/>
    </location>
</feature>
<feature type="turn" evidence="14">
    <location>
        <begin position="193"/>
        <end position="196"/>
    </location>
</feature>
<feature type="strand" evidence="14">
    <location>
        <begin position="197"/>
        <end position="202"/>
    </location>
</feature>
<feature type="strand" evidence="14">
    <location>
        <begin position="205"/>
        <end position="210"/>
    </location>
</feature>
<feature type="helix" evidence="14">
    <location>
        <begin position="218"/>
        <end position="220"/>
    </location>
</feature>
<feature type="strand" evidence="14">
    <location>
        <begin position="226"/>
        <end position="228"/>
    </location>
</feature>
<feature type="strand" evidence="14">
    <location>
        <begin position="232"/>
        <end position="235"/>
    </location>
</feature>
<feature type="strand" evidence="14">
    <location>
        <begin position="239"/>
        <end position="244"/>
    </location>
</feature>
<feature type="helix" evidence="14">
    <location>
        <begin position="245"/>
        <end position="255"/>
    </location>
</feature>
<feature type="turn" evidence="14">
    <location>
        <begin position="258"/>
        <end position="260"/>
    </location>
</feature>
<feature type="strand" evidence="14">
    <location>
        <begin position="261"/>
        <end position="268"/>
    </location>
</feature>
<feature type="turn" evidence="14">
    <location>
        <begin position="269"/>
        <end position="271"/>
    </location>
</feature>
<feature type="strand" evidence="14">
    <location>
        <begin position="272"/>
        <end position="283"/>
    </location>
</feature>
<feature type="strand" evidence="14">
    <location>
        <begin position="288"/>
        <end position="294"/>
    </location>
</feature>
<protein>
    <recommendedName>
        <fullName>DNA polymerase processivity factor BMRF1</fullName>
    </recommendedName>
    <alternativeName>
        <fullName>Early Antigen Diffused</fullName>
        <shortName>EA-D</shortName>
    </alternativeName>
    <alternativeName>
        <fullName>Polymerase accessory subunit</fullName>
    </alternativeName>
</protein>
<reference key="1">
    <citation type="journal article" date="1984" name="Nature">
        <title>DNA sequence and expression of the B95-8 Epstein-Barr virus genome.</title>
        <authorList>
            <person name="Baer R."/>
            <person name="Bankier A.T."/>
            <person name="Biggin M.D."/>
            <person name="Deininger P.L."/>
            <person name="Farrell P.J."/>
            <person name="Gibson T.J."/>
            <person name="Hatfull G."/>
            <person name="Hudson G.S."/>
            <person name="Satchwell S.C."/>
            <person name="Seguin C."/>
            <person name="Tuffnell P.S."/>
            <person name="Barrell B.G."/>
        </authorList>
    </citation>
    <scope>NUCLEOTIDE SEQUENCE [LARGE SCALE GENOMIC DNA]</scope>
</reference>
<reference key="2">
    <citation type="journal article" date="1987" name="J. Virol.">
        <title>Characterization of a cDNA clone corresponding to a transcript from the Epstein-Barr virus BamHI M fragment: evidence for overlapping mRNAs.</title>
        <authorList>
            <person name="Pfitzner A.J."/>
            <person name="Strominger J.L."/>
            <person name="Speck S.H."/>
        </authorList>
    </citation>
    <scope>NUCLEOTIDE SEQUENCE [GENOMIC DNA] OF 123-404</scope>
</reference>
<reference key="3">
    <citation type="journal article" date="2003" name="Virology">
        <title>Updated Epstein-Barr virus (EBV) DNA sequence and analysis of a promoter for the BART (CST, BARF0) RNAs of EBV.</title>
        <authorList>
            <person name="de Jesus O."/>
            <person name="Smith P.R."/>
            <person name="Spender L.C."/>
            <person name="Elgueta Karstegl C."/>
            <person name="Niller H.H."/>
            <person name="Huang D."/>
            <person name="Farrell P.J."/>
        </authorList>
    </citation>
    <scope>GENOME REANNOTATION</scope>
</reference>
<reference key="4">
    <citation type="journal article" date="1985" name="J. Virol.">
        <title>A second Epstein-Barr virus early antigen gene in BamHI fragment M encodes a 48- to 50-kilodalton nuclear protein.</title>
        <authorList>
            <person name="Cho M.-S."/>
            <person name="Milman G."/>
            <person name="Hayward S.D."/>
        </authorList>
    </citation>
    <scope>CHARACTERIZATION</scope>
</reference>
<reference key="5">
    <citation type="journal article" date="1996" name="J. Virol.">
        <title>Functional and physical interactions between the Epstein-Barr virus (EBV) proteins BZLF1 and BMRF1: Effects on EBV transcription and lytic replication.</title>
        <authorList>
            <person name="Zhang Q."/>
            <person name="Hong Y."/>
            <person name="Dorsky D."/>
            <person name="Holley-Guthrie E."/>
            <person name="Zalani S."/>
            <person name="Elshiekh N.A."/>
            <person name="Kiehl A."/>
            <person name="Le T."/>
            <person name="Kenney S."/>
        </authorList>
    </citation>
    <scope>INTERACTION WITH BZLF1</scope>
    <scope>FUNCTION</scope>
</reference>
<reference key="6">
    <citation type="journal article" date="1997" name="Virology">
        <title>A major DNA binding protein encoded by BALF2 open reading frame of Epstein-Barr virus (EBV) forms a complex with other EBV DNA-binding proteins: DNAase, EA-D, and DNA polymerase.</title>
        <authorList>
            <person name="Zeng Y."/>
            <person name="Middeldorp J."/>
            <person name="Madjar J.J."/>
            <person name="Ooka T."/>
        </authorList>
    </citation>
    <scope>INTERACTION WITH BALF2; BALF5 AND BGLF5</scope>
</reference>
<reference key="7">
    <citation type="journal article" date="1997" name="Virology">
        <title>The Epstein-Barr virus (EBV) DNA polymerase accessory protein, BMRF1, activates the essential downstream component of the EBV oriLyt.</title>
        <authorList>
            <person name="Zhang Q."/>
            <person name="Holley-Guthrie E."/>
            <person name="Ge J.Q."/>
            <person name="Dorsky D."/>
            <person name="Kenney S."/>
        </authorList>
    </citation>
    <scope>FUNCTION</scope>
</reference>
<reference key="8">
    <citation type="journal article" date="1999" name="J. Gen. Virol.">
        <title>Identification of transactivator and nuclear localization domains in the Epstein-Barr virus DNA polymerase accessory protein, BMRF1.</title>
        <authorList>
            <person name="Zhang Q."/>
            <person name="Holley-Guthrie E."/>
            <person name="Dorsky D."/>
            <person name="Kenney S."/>
        </authorList>
    </citation>
    <scope>DOMAIN</scope>
</reference>
<reference key="9">
    <citation type="journal article" date="2004" name="J. Biol. Chem.">
        <title>The Epstein-Barr virus polymerase accessory factor BMRF1 adopts a ring-shaped structure as visualized by electron microscopy.</title>
        <authorList>
            <person name="Makhov A.M."/>
            <person name="Subramanian D."/>
            <person name="Holley-Guthrie E."/>
            <person name="Kenney S.C."/>
            <person name="Griffith J.D."/>
        </authorList>
    </citation>
    <scope>SUBUNIT</scope>
</reference>
<reference key="10">
    <citation type="journal article" date="2004" name="Proc. Natl. Acad. Sci. U.S.A.">
        <title>Proteins of purified Epstein-Barr virus.</title>
        <authorList>
            <person name="Johannsen E."/>
            <person name="Luftig M."/>
            <person name="Chase M.R."/>
            <person name="Weicksel S."/>
            <person name="Cahir-McFarland E."/>
            <person name="Illanes D."/>
            <person name="Sarracino D."/>
            <person name="Kieff E."/>
        </authorList>
    </citation>
    <scope>SUBCELLULAR LOCATION</scope>
</reference>
<reference key="11">
    <citation type="journal article" date="2005" name="J. Virol.">
        <title>Architecture of replication compartments formed during Epstein-Barr virus lytic replication.</title>
        <authorList>
            <person name="Daikoku T."/>
            <person name="Kudoh A."/>
            <person name="Fujita M."/>
            <person name="Sugaya Y."/>
            <person name="Isomura H."/>
            <person name="Shirata N."/>
            <person name="Tsurumi T."/>
        </authorList>
    </citation>
    <scope>SUBCELLULAR LOCATION</scope>
</reference>
<reference key="12">
    <citation type="journal article" date="2006" name="J. Virol.">
        <title>The Epstein-Barr virus BMRF1 gene is essential for lytic virus replication.</title>
        <authorList>
            <person name="Neuhierl B."/>
            <person name="Delecluse H.J."/>
        </authorList>
    </citation>
    <scope>FUNCTION</scope>
</reference>
<reference key="13">
    <citation type="journal article" date="2008" name="J. Gen. Virol.">
        <title>Effect of phosphorylation on the transactivation activity of Epstein-Barr virus BMRF1, a major target of the viral BGLF4 kinase.</title>
        <authorList>
            <person name="Yang P.W."/>
            <person name="Chang S.S."/>
            <person name="Tsai C.H."/>
            <person name="Chao Y.H."/>
            <person name="Chen M.R."/>
        </authorList>
    </citation>
    <scope>PHOSPHORYLATION AT SER-337; THR-344; SER-349 AND THR-355</scope>
    <scope>MUTAGENESIS OF SER-314; SER-333; SER-337; THR-344; SER-349 AND THR-355</scope>
</reference>
<reference key="14">
    <citation type="journal article" date="2014" name="J. Virol.">
        <title>Identification of herpesvirus proteins that contribute to G1/S arrest.</title>
        <authorList>
            <person name="Paladino P."/>
            <person name="Marcon E."/>
            <person name="Greenblatt J."/>
            <person name="Frappier L."/>
        </authorList>
    </citation>
    <scope>FUNCTION</scope>
</reference>
<reference key="15">
    <citation type="journal article" date="2019" name="J. Virol.">
        <title>The Epstein-Barr Virus BMRF1 Protein Activates Transcription and Inhibits the DNA Damage Response by Binding NuRD.</title>
        <authorList>
            <person name="Salamun S.G."/>
            <person name="Sitz J."/>
            <person name="De La Cruz-Herrera C.F."/>
            <person name="Yockteng-Melgar J."/>
            <person name="Marcon E."/>
            <person name="Greenblatt J."/>
            <person name="Fradet-Turcotte A."/>
            <person name="Frappier L."/>
        </authorList>
    </citation>
    <scope>FUNCTION</scope>
    <scope>INTERACTION WITH HOST NURD COMPLEX</scope>
    <scope>MUTAGENESIS OF ARG-256; 387-ARG--LYS-389 AND PRO-393</scope>
</reference>
<reference evidence="13" key="16">
    <citation type="journal article" date="2009" name="J. Biol. Chem.">
        <title>Crystal structure of epstein-barr virus DNA polymerase processivity factor BMRF1.</title>
        <authorList>
            <person name="Murayama K."/>
            <person name="Nakayama S."/>
            <person name="Kato-Murayama M."/>
            <person name="Akasaka R."/>
            <person name="Ohbayashi N."/>
            <person name="Kamewari-Hayami Y."/>
            <person name="Terada T."/>
            <person name="Shirouzu M."/>
            <person name="Tsurumi T."/>
            <person name="Yokoyama S."/>
        </authorList>
    </citation>
    <scope>X-RAY CRYSTALLOGRAPHY (2.90 ANGSTROMS) OF 1-314</scope>
    <scope>FUNCTION</scope>
    <scope>SUBUNIT</scope>
    <scope>DISULFIDE BONDS</scope>
    <scope>DOMAIN</scope>
</reference>
<name>EAD_EBVB9</name>
<organism>
    <name type="scientific">Epstein-Barr virus (strain B95-8)</name>
    <name type="common">HHV-4</name>
    <name type="synonym">Human herpesvirus 4</name>
    <dbReference type="NCBI Taxonomy" id="10377"/>
    <lineage>
        <taxon>Viruses</taxon>
        <taxon>Duplodnaviria</taxon>
        <taxon>Heunggongvirae</taxon>
        <taxon>Peploviricota</taxon>
        <taxon>Herviviricetes</taxon>
        <taxon>Herpesvirales</taxon>
        <taxon>Orthoherpesviridae</taxon>
        <taxon>Gammaherpesvirinae</taxon>
        <taxon>Lymphocryptovirus</taxon>
        <taxon>Lymphocryptovirus humangamma4</taxon>
        <taxon>Epstein-Barr virus (strain GD1)</taxon>
    </lineage>
</organism>
<proteinExistence type="evidence at protein level"/>
<accession>P03191</accession>
<accession>Q777F9</accession>
<gene>
    <name type="ORF">BMRF1</name>
</gene>
<comment type="function">
    <text evidence="3 5 6 7 8 9">Acts as a DNA polymerase processivity factor; a transcriptional activator for several EBV promoters and inhibits the host DNA damage response (DDR) to double-stranded DNA breaks (PubMed:16641300, PubMed:19801550, PubMed:31462557, PubMed:8764021). Plays an essential role in the viral lytic DNA replication by acting as a polymerase accessory subunit (PubMed:16641300, PubMed:19801550). Stimulates the viral DNA polymerase activity and appears to function with it as a holoenzyme (PubMed:19801550). Increases the processivity of the viral polymerase, probably by acting as a sliding clamp that prevents dissociation of the polymerase from the active template (PubMed:19801550). In addition, BMRF1 transcriptionally activates the oriLyt early BHLF1 promoter (PubMed:8764021, PubMed:9126259). Promotes G1/S cell cycle arrest through p53 induction (PubMed:24501404).</text>
</comment>
<comment type="subunit">
    <text evidence="2 5 7 8 10">Homodimer (PubMed:19801550). Two dimers can adopt a tetrameric ring-like structure (PubMed:15286084, PubMed:19801550). Forms a complex with the DNA-binding protein BALF2, the DNA polymerase subunit BALF5, and the alkaline exonuclease BGLF5 (PubMed:9434720). Interacts (via N-terminus) with BZLF1 (via bZIP domain); this interaction may inhibit BZLF1-induced transcription of the BMRF1 promoter (PubMed:8764021). Interacts (via C-terminus) with host NuRD complex; this interaction is important for transcriptional activation of EBV promoters and inhibition of the ubiquitination step of DDR signaling (PubMed:31462557).</text>
</comment>
<comment type="subcellular location">
    <subcellularLocation>
        <location>Virion tegument</location>
    </subcellularLocation>
    <subcellularLocation>
        <location>Host nucleus</location>
    </subcellularLocation>
    <text>BMRF1 shows homogeneous, not dot-like, distribution in the replication compartments, which coincides with the newly synthesized viral DNA.</text>
</comment>
<comment type="domain">
    <text evidence="5 11">The N-terminus is important for dimerization, DNA binding, and DNA polymerase processivity (PubMed:19801550). The C-terminus mediates transcriptional activation (PubMed:9934686).</text>
</comment>
<comment type="PTM">
    <text evidence="4">Phosphorylated by the viral BGLF4 kinase.</text>
</comment>
<comment type="similarity">
    <text evidence="12">Belongs to the herpesviridae DNA polymerase accessory subunit family.</text>
</comment>